<comment type="subcellular location">
    <subcellularLocation>
        <location evidence="2">Cell membrane</location>
        <topology evidence="2">Multi-pass membrane protein</topology>
    </subcellularLocation>
</comment>
<comment type="similarity">
    <text evidence="2">Belongs to the UPF0324 family.</text>
</comment>
<proteinExistence type="inferred from homology"/>
<keyword id="KW-1003">Cell membrane</keyword>
<keyword id="KW-0472">Membrane</keyword>
<keyword id="KW-1185">Reference proteome</keyword>
<keyword id="KW-0812">Transmembrane</keyword>
<keyword id="KW-1133">Transmembrane helix</keyword>
<accession>Q8RFZ3</accession>
<evidence type="ECO:0000255" key="1"/>
<evidence type="ECO:0000305" key="2"/>
<reference key="1">
    <citation type="journal article" date="2002" name="J. Bacteriol.">
        <title>Genome sequence and analysis of the oral bacterium Fusobacterium nucleatum strain ATCC 25586.</title>
        <authorList>
            <person name="Kapatral V."/>
            <person name="Anderson I."/>
            <person name="Ivanova N."/>
            <person name="Reznik G."/>
            <person name="Los T."/>
            <person name="Lykidis A."/>
            <person name="Bhattacharyya A."/>
            <person name="Bartman A."/>
            <person name="Gardner W."/>
            <person name="Grechkin G."/>
            <person name="Zhu L."/>
            <person name="Vasieva O."/>
            <person name="Chu L."/>
            <person name="Kogan Y."/>
            <person name="Chaga O."/>
            <person name="Goltsman E."/>
            <person name="Bernal A."/>
            <person name="Larsen N."/>
            <person name="D'Souza M."/>
            <person name="Walunas T."/>
            <person name="Pusch G."/>
            <person name="Haselkorn R."/>
            <person name="Fonstein M."/>
            <person name="Kyrpides N.C."/>
            <person name="Overbeek R."/>
        </authorList>
    </citation>
    <scope>NUCLEOTIDE SEQUENCE [LARGE SCALE GENOMIC DNA]</scope>
    <source>
        <strain>ATCC 25586 / DSM 15643 / BCRC 10681 / CIP 101130 / JCM 8532 / KCTC 2640 / LMG 13131 / VPI 4355</strain>
    </source>
</reference>
<dbReference type="EMBL" id="AE009951">
    <property type="protein sequence ID" value="AAL94729.1"/>
    <property type="molecule type" value="Genomic_DNA"/>
</dbReference>
<dbReference type="RefSeq" id="NP_603430.1">
    <property type="nucleotide sequence ID" value="NC_003454.1"/>
</dbReference>
<dbReference type="RefSeq" id="WP_011016459.1">
    <property type="nucleotide sequence ID" value="NZ_CP028101.1"/>
</dbReference>
<dbReference type="STRING" id="190304.FN0533"/>
<dbReference type="PaxDb" id="190304-FN0533"/>
<dbReference type="EnsemblBacteria" id="AAL94729">
    <property type="protein sequence ID" value="AAL94729"/>
    <property type="gene ID" value="FN0533"/>
</dbReference>
<dbReference type="GeneID" id="79783535"/>
<dbReference type="KEGG" id="fnu:FN0533"/>
<dbReference type="PATRIC" id="fig|190304.8.peg.1100"/>
<dbReference type="eggNOG" id="COG2855">
    <property type="taxonomic scope" value="Bacteria"/>
</dbReference>
<dbReference type="HOGENOM" id="CLU_033541_2_1_0"/>
<dbReference type="InParanoid" id="Q8RFZ3"/>
<dbReference type="BioCyc" id="FNUC190304:G1FZS-1122-MONOMER"/>
<dbReference type="Proteomes" id="UP000002521">
    <property type="component" value="Chromosome"/>
</dbReference>
<dbReference type="GO" id="GO:0005886">
    <property type="term" value="C:plasma membrane"/>
    <property type="evidence" value="ECO:0000318"/>
    <property type="project" value="GO_Central"/>
</dbReference>
<dbReference type="InterPro" id="IPR018383">
    <property type="entry name" value="UPF0324_pro"/>
</dbReference>
<dbReference type="PANTHER" id="PTHR30106">
    <property type="entry name" value="INNER MEMBRANE PROTEIN YEIH-RELATED"/>
    <property type="match status" value="1"/>
</dbReference>
<dbReference type="PANTHER" id="PTHR30106:SF1">
    <property type="entry name" value="UPF0324 MEMBRANE PROTEIN FN0533"/>
    <property type="match status" value="1"/>
</dbReference>
<dbReference type="Pfam" id="PF03601">
    <property type="entry name" value="Cons_hypoth698"/>
    <property type="match status" value="1"/>
</dbReference>
<organism>
    <name type="scientific">Fusobacterium nucleatum subsp. nucleatum (strain ATCC 25586 / DSM 15643 / BCRC 10681 / CIP 101130 / JCM 8532 / KCTC 2640 / LMG 13131 / VPI 4355)</name>
    <dbReference type="NCBI Taxonomy" id="190304"/>
    <lineage>
        <taxon>Bacteria</taxon>
        <taxon>Fusobacteriati</taxon>
        <taxon>Fusobacteriota</taxon>
        <taxon>Fusobacteriia</taxon>
        <taxon>Fusobacteriales</taxon>
        <taxon>Fusobacteriaceae</taxon>
        <taxon>Fusobacterium</taxon>
    </lineage>
</organism>
<feature type="chain" id="PRO_0000157418" description="UPF0324 membrane protein FN0533">
    <location>
        <begin position="1"/>
        <end position="346"/>
    </location>
</feature>
<feature type="transmembrane region" description="Helical" evidence="1">
    <location>
        <begin position="5"/>
        <end position="22"/>
    </location>
</feature>
<feature type="transmembrane region" description="Helical" evidence="1">
    <location>
        <begin position="27"/>
        <end position="49"/>
    </location>
</feature>
<feature type="transmembrane region" description="Helical" evidence="1">
    <location>
        <begin position="62"/>
        <end position="81"/>
    </location>
</feature>
<feature type="transmembrane region" description="Helical" evidence="1">
    <location>
        <begin position="86"/>
        <end position="108"/>
    </location>
</feature>
<feature type="transmembrane region" description="Helical" evidence="1">
    <location>
        <begin position="115"/>
        <end position="137"/>
    </location>
</feature>
<feature type="transmembrane region" description="Helical" evidence="1">
    <location>
        <begin position="147"/>
        <end position="169"/>
    </location>
</feature>
<feature type="transmembrane region" description="Helical" evidence="1">
    <location>
        <begin position="216"/>
        <end position="233"/>
    </location>
</feature>
<feature type="transmembrane region" description="Helical" evidence="1">
    <location>
        <begin position="248"/>
        <end position="270"/>
    </location>
</feature>
<feature type="transmembrane region" description="Helical" evidence="1">
    <location>
        <begin position="283"/>
        <end position="305"/>
    </location>
</feature>
<feature type="transmembrane region" description="Helical" evidence="1">
    <location>
        <begin position="315"/>
        <end position="337"/>
    </location>
</feature>
<protein>
    <recommendedName>
        <fullName>UPF0324 membrane protein FN0533</fullName>
    </recommendedName>
</protein>
<gene>
    <name type="ordered locus">FN0533</name>
</gene>
<sequence length="346" mass="37079">MNNKLYGIILCFLLALPAWKLGKFFPLVGGPVFGIIIGIVIAILLKNRAKFDSGINFASKKVLQYAVILLGFGLNLQTIISVGSSSLPIIVSTISTSLIIAYILAKLINIPTKIVILIGVGSSICGGSAIAATAPVINAHDDEIAQAISVIFLFNVIAALIFPTLGDILNFSNKGFALFAGTAVNDTSSVTATASAWDSIHNTGTQVLDSATIVKLTRTLAIIPITLFLAVYNSKRSSNVNNFSLKKIFPMFIVYFILASIITTVCNYFIEVGVITENISITINNVFSFFKHLSKFFIIMAMVAIGLNTNIKKLILSGAKPLTLGFCCWFAISLVSIGLQKILGIF</sequence>
<name>Y533_FUSNN</name>